<evidence type="ECO:0000255" key="1">
    <source>
        <dbReference type="HAMAP-Rule" id="MF_00246"/>
    </source>
</evidence>
<comment type="function">
    <text evidence="1">Catalyzes the transfer of the gamma-phosphate of ATP to D-galactose to form alpha-D-galactose-1-phosphate (Gal-1-P).</text>
</comment>
<comment type="catalytic activity">
    <reaction evidence="1">
        <text>alpha-D-galactose + ATP = alpha-D-galactose 1-phosphate + ADP + H(+)</text>
        <dbReference type="Rhea" id="RHEA:13553"/>
        <dbReference type="ChEBI" id="CHEBI:15378"/>
        <dbReference type="ChEBI" id="CHEBI:28061"/>
        <dbReference type="ChEBI" id="CHEBI:30616"/>
        <dbReference type="ChEBI" id="CHEBI:58336"/>
        <dbReference type="ChEBI" id="CHEBI:456216"/>
        <dbReference type="EC" id="2.7.1.6"/>
    </reaction>
</comment>
<comment type="pathway">
    <text evidence="1">Carbohydrate metabolism; galactose metabolism.</text>
</comment>
<comment type="subcellular location">
    <subcellularLocation>
        <location evidence="1">Cytoplasm</location>
    </subcellularLocation>
</comment>
<comment type="similarity">
    <text evidence="1">Belongs to the GHMP kinase family. GalK subfamily.</text>
</comment>
<gene>
    <name evidence="1" type="primary">galK</name>
    <name type="ordered locus">CTC_00865</name>
</gene>
<dbReference type="EC" id="2.7.1.6" evidence="1"/>
<dbReference type="EMBL" id="AE015927">
    <property type="protein sequence ID" value="AAO35462.1"/>
    <property type="molecule type" value="Genomic_DNA"/>
</dbReference>
<dbReference type="SMR" id="Q896X8"/>
<dbReference type="STRING" id="212717.CTC_00865"/>
<dbReference type="KEGG" id="ctc:CTC_00865"/>
<dbReference type="HOGENOM" id="CLU_017814_2_1_9"/>
<dbReference type="UniPathway" id="UPA00214"/>
<dbReference type="Proteomes" id="UP000001412">
    <property type="component" value="Chromosome"/>
</dbReference>
<dbReference type="GO" id="GO:0005829">
    <property type="term" value="C:cytosol"/>
    <property type="evidence" value="ECO:0007669"/>
    <property type="project" value="TreeGrafter"/>
</dbReference>
<dbReference type="GO" id="GO:0005524">
    <property type="term" value="F:ATP binding"/>
    <property type="evidence" value="ECO:0007669"/>
    <property type="project" value="UniProtKB-UniRule"/>
</dbReference>
<dbReference type="GO" id="GO:0004335">
    <property type="term" value="F:galactokinase activity"/>
    <property type="evidence" value="ECO:0007669"/>
    <property type="project" value="UniProtKB-UniRule"/>
</dbReference>
<dbReference type="GO" id="GO:0000287">
    <property type="term" value="F:magnesium ion binding"/>
    <property type="evidence" value="ECO:0007669"/>
    <property type="project" value="UniProtKB-UniRule"/>
</dbReference>
<dbReference type="GO" id="GO:0006012">
    <property type="term" value="P:galactose metabolic process"/>
    <property type="evidence" value="ECO:0007669"/>
    <property type="project" value="UniProtKB-UniRule"/>
</dbReference>
<dbReference type="FunFam" id="3.30.230.10:FF:000017">
    <property type="entry name" value="Galactokinase"/>
    <property type="match status" value="1"/>
</dbReference>
<dbReference type="FunFam" id="3.30.70.890:FF:000001">
    <property type="entry name" value="Galactokinase"/>
    <property type="match status" value="1"/>
</dbReference>
<dbReference type="Gene3D" id="3.30.230.10">
    <property type="match status" value="1"/>
</dbReference>
<dbReference type="Gene3D" id="3.30.70.890">
    <property type="entry name" value="GHMP kinase, C-terminal domain"/>
    <property type="match status" value="1"/>
</dbReference>
<dbReference type="HAMAP" id="MF_00246">
    <property type="entry name" value="Galactokinase"/>
    <property type="match status" value="1"/>
</dbReference>
<dbReference type="InterPro" id="IPR000705">
    <property type="entry name" value="Galactokinase"/>
</dbReference>
<dbReference type="InterPro" id="IPR022963">
    <property type="entry name" value="Galactokinase_bac"/>
</dbReference>
<dbReference type="InterPro" id="IPR019741">
    <property type="entry name" value="Galactokinase_CS"/>
</dbReference>
<dbReference type="InterPro" id="IPR019539">
    <property type="entry name" value="GalKase_N"/>
</dbReference>
<dbReference type="InterPro" id="IPR013750">
    <property type="entry name" value="GHMP_kinase_C_dom"/>
</dbReference>
<dbReference type="InterPro" id="IPR036554">
    <property type="entry name" value="GHMP_kinase_C_sf"/>
</dbReference>
<dbReference type="InterPro" id="IPR006204">
    <property type="entry name" value="GHMP_kinase_N_dom"/>
</dbReference>
<dbReference type="InterPro" id="IPR006203">
    <property type="entry name" value="GHMP_knse_ATP-bd_CS"/>
</dbReference>
<dbReference type="InterPro" id="IPR006206">
    <property type="entry name" value="Mevalonate/galactokinase"/>
</dbReference>
<dbReference type="InterPro" id="IPR020568">
    <property type="entry name" value="Ribosomal_Su5_D2-typ_SF"/>
</dbReference>
<dbReference type="InterPro" id="IPR014721">
    <property type="entry name" value="Ribsml_uS5_D2-typ_fold_subgr"/>
</dbReference>
<dbReference type="NCBIfam" id="TIGR00131">
    <property type="entry name" value="gal_kin"/>
    <property type="match status" value="1"/>
</dbReference>
<dbReference type="NCBIfam" id="NF003705">
    <property type="entry name" value="PRK05322.1"/>
    <property type="match status" value="1"/>
</dbReference>
<dbReference type="PANTHER" id="PTHR10457:SF7">
    <property type="entry name" value="GALACTOKINASE-RELATED"/>
    <property type="match status" value="1"/>
</dbReference>
<dbReference type="PANTHER" id="PTHR10457">
    <property type="entry name" value="MEVALONATE KINASE/GALACTOKINASE"/>
    <property type="match status" value="1"/>
</dbReference>
<dbReference type="Pfam" id="PF10509">
    <property type="entry name" value="GalKase_gal_bdg"/>
    <property type="match status" value="1"/>
</dbReference>
<dbReference type="Pfam" id="PF08544">
    <property type="entry name" value="GHMP_kinases_C"/>
    <property type="match status" value="1"/>
</dbReference>
<dbReference type="Pfam" id="PF00288">
    <property type="entry name" value="GHMP_kinases_N"/>
    <property type="match status" value="1"/>
</dbReference>
<dbReference type="PIRSF" id="PIRSF000530">
    <property type="entry name" value="Galactokinase"/>
    <property type="match status" value="1"/>
</dbReference>
<dbReference type="PRINTS" id="PR00473">
    <property type="entry name" value="GALCTOKINASE"/>
</dbReference>
<dbReference type="PRINTS" id="PR00959">
    <property type="entry name" value="MEVGALKINASE"/>
</dbReference>
<dbReference type="SUPFAM" id="SSF55060">
    <property type="entry name" value="GHMP Kinase, C-terminal domain"/>
    <property type="match status" value="1"/>
</dbReference>
<dbReference type="SUPFAM" id="SSF54211">
    <property type="entry name" value="Ribosomal protein S5 domain 2-like"/>
    <property type="match status" value="1"/>
</dbReference>
<dbReference type="PROSITE" id="PS00106">
    <property type="entry name" value="GALACTOKINASE"/>
    <property type="match status" value="1"/>
</dbReference>
<dbReference type="PROSITE" id="PS00627">
    <property type="entry name" value="GHMP_KINASES_ATP"/>
    <property type="match status" value="1"/>
</dbReference>
<keyword id="KW-0067">ATP-binding</keyword>
<keyword id="KW-0119">Carbohydrate metabolism</keyword>
<keyword id="KW-0963">Cytoplasm</keyword>
<keyword id="KW-0299">Galactose metabolism</keyword>
<keyword id="KW-0418">Kinase</keyword>
<keyword id="KW-0460">Magnesium</keyword>
<keyword id="KW-0479">Metal-binding</keyword>
<keyword id="KW-0547">Nucleotide-binding</keyword>
<keyword id="KW-1185">Reference proteome</keyword>
<keyword id="KW-0808">Transferase</keyword>
<reference key="1">
    <citation type="journal article" date="2003" name="Proc. Natl. Acad. Sci. U.S.A.">
        <title>The genome sequence of Clostridium tetani, the causative agent of tetanus disease.</title>
        <authorList>
            <person name="Brueggemann H."/>
            <person name="Baeumer S."/>
            <person name="Fricke W.F."/>
            <person name="Wiezer A."/>
            <person name="Liesegang H."/>
            <person name="Decker I."/>
            <person name="Herzberg C."/>
            <person name="Martinez-Arias R."/>
            <person name="Merkl R."/>
            <person name="Henne A."/>
            <person name="Gottschalk G."/>
        </authorList>
    </citation>
    <scope>NUCLEOTIDE SEQUENCE [LARGE SCALE GENOMIC DNA]</scope>
    <source>
        <strain>Massachusetts / E88</strain>
    </source>
</reference>
<organism>
    <name type="scientific">Clostridium tetani (strain Massachusetts / E88)</name>
    <dbReference type="NCBI Taxonomy" id="212717"/>
    <lineage>
        <taxon>Bacteria</taxon>
        <taxon>Bacillati</taxon>
        <taxon>Bacillota</taxon>
        <taxon>Clostridia</taxon>
        <taxon>Eubacteriales</taxon>
        <taxon>Clostridiaceae</taxon>
        <taxon>Clostridium</taxon>
    </lineage>
</organism>
<proteinExistence type="inferred from homology"/>
<sequence>MVKWRNNMNINELKKEFIKIYGEGSMRNFFSPGRVNLIGEHIDYNGGHVFPCALNFGTLGCVRKRKDNKVNLASTNIPLKVSINLEDIKYEKKHGWGNYPKGVIKEIIDKGYKVGGMDILISGNIPNGSGLSSSASLELLIAIMINNIFNDGKLDKVELIKLSQKAENDFVGLNCGIMDQFAVAMGKKDMAILLDCNTLEYKYAPVDLGNYVITIMNTNKRRELSDSKYNERRLECEKALKLINKEKKINYLCELSLEEFESLKYLIKDNRVLNRATHVVYENERVKRAYYLLSKRNLKEFGKLLAESHFSLRDLYEVTGKELDAIVGEALNVSGCIGARMIGAGFGGCAIALVEKSKLDLFKKKVSNNYNKIIGYKPGFYTSEIGEGTYEI</sequence>
<name>GAL1_CLOTE</name>
<feature type="chain" id="PRO_0000184606" description="Galactokinase">
    <location>
        <begin position="1"/>
        <end position="392"/>
    </location>
</feature>
<feature type="active site" description="Proton acceptor" evidence="1">
    <location>
        <position position="179"/>
    </location>
</feature>
<feature type="binding site" evidence="1">
    <location>
        <begin position="40"/>
        <end position="43"/>
    </location>
    <ligand>
        <name>substrate</name>
    </ligand>
</feature>
<feature type="binding site" evidence="1">
    <location>
        <position position="74"/>
    </location>
    <ligand>
        <name>ATP</name>
        <dbReference type="ChEBI" id="CHEBI:30616"/>
    </ligand>
</feature>
<feature type="binding site" evidence="1">
    <location>
        <begin position="128"/>
        <end position="134"/>
    </location>
    <ligand>
        <name>ATP</name>
        <dbReference type="ChEBI" id="CHEBI:30616"/>
    </ligand>
</feature>
<feature type="binding site" evidence="1">
    <location>
        <position position="134"/>
    </location>
    <ligand>
        <name>Mg(2+)</name>
        <dbReference type="ChEBI" id="CHEBI:18420"/>
    </ligand>
</feature>
<feature type="binding site" evidence="1">
    <location>
        <position position="167"/>
    </location>
    <ligand>
        <name>Mg(2+)</name>
        <dbReference type="ChEBI" id="CHEBI:18420"/>
    </ligand>
</feature>
<feature type="binding site" evidence="1">
    <location>
        <position position="229"/>
    </location>
    <ligand>
        <name>substrate</name>
    </ligand>
</feature>
<feature type="site" description="Transition state stabilizer" evidence="1">
    <location>
        <position position="34"/>
    </location>
</feature>
<protein>
    <recommendedName>
        <fullName evidence="1">Galactokinase</fullName>
        <ecNumber evidence="1">2.7.1.6</ecNumber>
    </recommendedName>
    <alternativeName>
        <fullName evidence="1">Galactose kinase</fullName>
    </alternativeName>
</protein>
<accession>Q896X8</accession>